<comment type="function">
    <text evidence="3 4">Mitochondrial membrane ATP synthase (F(1)F(0) ATP synthase or Complex V) produces ATP from ADP in the presence of a proton gradient across the membrane which is generated by electron transport complexes of the respiratory chain (PubMed:25759169). F-type ATP synthases consist of two structural domains, F(1) - containing the extramembraneous catalytic core, and F(0) - containing the membrane proton channel, linked together by a central stalk and a peripheral stalk (PubMed:27373333). During catalysis, ATP synthesis in the catalytic domain of F(1) is coupled via a rotary mechanism of the central stalk subunits to proton translocation (PubMed:27373333). Part of the complex F(1) domain and the central stalk which is part of the complex rotary element (PubMed:27373333). The gamma/ATP3 subunit protrudes into the catalytic domain formed of alpha/ATP1(3)beta/ATP2(3) (PubMed:27373333). Rotation of the central stalk against the surrounding alpha/ATP1(3)beta/ATP2(3) subunits leads to hydrolysis of ATP in three separate catalytic sites on the beta/ATP2 subunits (PubMed:27373333).</text>
</comment>
<comment type="subunit">
    <text evidence="3 4">F-type ATP synthases have 2 components, the catalytic core F(1) and the membrane-embedded component F(0), linked together by a central stalk and a peripheral stalk (PubMed:27373333). The central stalk, also called rotor shaft, is often seen as part of F(1) (PubMed:27373333). The peripheral stalk is seen as part of F(0) (PubMed:27373333). F(0) contains the membrane channel next to the rotor (PubMed:27373333). F-type ATP synthases form dimers but each monomer functions independently in ATP generation (PubMed:27373333). The dimer consists of 17 different polypeptides: ATP1 (subunit alpha, 3 molecules per monomer, part of F(1)), ATP2 (subunit beta, 3 copies per monomer, part of F(1)), ATP3 (subunit gamma, part of the central stalk), ATP4 (subunit b, part of the peripheral stalk), ATP5/OSCP (subunit 5/OSCP, part of the peripheral stalk), ATP6 (subunit a, part of the peripheral stalk), ATP7 (subunit d, part of the peripheral stalk), ATP8 (subunit 8, part of the peripheral stalk), OLI1 (subunit c, part of the rotor, 10 molecules per monomer), ATP14 (subunit h, part of the peripheral stalk), ATP15 (subunit epsilon, part of the central stalk), ATP16 (subunit delta, part of the central stalk), ATP17 (subunit f, part of the peripheral stalk), ATP18 (subunit i/j, part of the peripheral stalk), ATP19 (subunit k, dimer-specific, at interface between monomers), ATP20 (subunit g, at interface between monomers), TIM11 (subunit e, at interface between monomers) (PubMed:25759169, PubMed:27373333).</text>
</comment>
<comment type="subcellular location">
    <subcellularLocation>
        <location evidence="7">Mitochondrion inner membrane</location>
        <topology evidence="7">Peripheral membrane protein</topology>
        <orientation evidence="7">Matrix side</orientation>
    </subcellularLocation>
    <text evidence="7">The F-type ATP synthase complex is anchored in the mitochondrial inner membrane via the F(0) domain with the F(1) domain and the peripheral stalk extending into the mitochondrial matrix.</text>
</comment>
<comment type="mass spectrometry"/>
<comment type="similarity">
    <text evidence="2">Belongs to the ATPase gamma chain family.</text>
</comment>
<keyword id="KW-0002">3D-structure</keyword>
<keyword id="KW-0066">ATP synthesis</keyword>
<keyword id="KW-0139">CF(1)</keyword>
<keyword id="KW-0375">Hydrogen ion transport</keyword>
<keyword id="KW-0406">Ion transport</keyword>
<keyword id="KW-0472">Membrane</keyword>
<keyword id="KW-0496">Mitochondrion</keyword>
<keyword id="KW-0999">Mitochondrion inner membrane</keyword>
<keyword id="KW-1185">Reference proteome</keyword>
<keyword id="KW-0809">Transit peptide</keyword>
<keyword id="KW-0813">Transport</keyword>
<organism evidence="9">
    <name type="scientific">Yarrowia lipolytica (strain CLIB 122 / E 150)</name>
    <name type="common">Yeast</name>
    <name type="synonym">Candida lipolytica</name>
    <dbReference type="NCBI Taxonomy" id="284591"/>
    <lineage>
        <taxon>Eukaryota</taxon>
        <taxon>Fungi</taxon>
        <taxon>Dikarya</taxon>
        <taxon>Ascomycota</taxon>
        <taxon>Saccharomycotina</taxon>
        <taxon>Dipodascomycetes</taxon>
        <taxon>Dipodascales</taxon>
        <taxon>Dipodascales incertae sedis</taxon>
        <taxon>Yarrowia</taxon>
    </lineage>
</organism>
<protein>
    <recommendedName>
        <fullName evidence="1">ATP synthase subunit gamma, mitochondrial</fullName>
    </recommendedName>
    <alternativeName>
        <fullName evidence="1">F-ATPase gamma subunit</fullName>
    </alternativeName>
</protein>
<proteinExistence type="evidence at protein level"/>
<accession>Q6C338</accession>
<dbReference type="EMBL" id="CR382132">
    <property type="protein sequence ID" value="CAG77729.2"/>
    <property type="molecule type" value="Genomic_DNA"/>
</dbReference>
<dbReference type="RefSeq" id="XP_504924.2">
    <property type="nucleotide sequence ID" value="XM_504924.2"/>
</dbReference>
<dbReference type="PDB" id="5FL7">
    <property type="method" value="X-ray"/>
    <property type="resolution" value="3.50 A"/>
    <property type="chains" value="G=1-293"/>
</dbReference>
<dbReference type="PDBsum" id="5FL7"/>
<dbReference type="SMR" id="Q6C338"/>
<dbReference type="FunCoup" id="Q6C338">
    <property type="interactions" value="984"/>
</dbReference>
<dbReference type="STRING" id="284591.Q6C338"/>
<dbReference type="EnsemblFungi" id="CAG77729">
    <property type="protein sequence ID" value="CAG77729"/>
    <property type="gene ID" value="YALI0_F02893g"/>
</dbReference>
<dbReference type="KEGG" id="yli:2907762"/>
<dbReference type="VEuPathDB" id="FungiDB:YALI0_F02893g"/>
<dbReference type="HOGENOM" id="CLU_050669_4_1_1"/>
<dbReference type="InParanoid" id="Q6C338"/>
<dbReference type="OMA" id="MQITSAM"/>
<dbReference type="OrthoDB" id="779at4891"/>
<dbReference type="Proteomes" id="UP000001300">
    <property type="component" value="Chromosome F"/>
</dbReference>
<dbReference type="GO" id="GO:0005743">
    <property type="term" value="C:mitochondrial inner membrane"/>
    <property type="evidence" value="ECO:0007669"/>
    <property type="project" value="UniProtKB-SubCell"/>
</dbReference>
<dbReference type="GO" id="GO:0045259">
    <property type="term" value="C:proton-transporting ATP synthase complex"/>
    <property type="evidence" value="ECO:0007669"/>
    <property type="project" value="UniProtKB-KW"/>
</dbReference>
<dbReference type="GO" id="GO:0046933">
    <property type="term" value="F:proton-transporting ATP synthase activity, rotational mechanism"/>
    <property type="evidence" value="ECO:0007669"/>
    <property type="project" value="EnsemblFungi"/>
</dbReference>
<dbReference type="GO" id="GO:0046961">
    <property type="term" value="F:proton-transporting ATPase activity, rotational mechanism"/>
    <property type="evidence" value="ECO:0007669"/>
    <property type="project" value="EnsemblFungi"/>
</dbReference>
<dbReference type="GO" id="GO:0015986">
    <property type="term" value="P:proton motive force-driven ATP synthesis"/>
    <property type="evidence" value="ECO:0000318"/>
    <property type="project" value="GO_Central"/>
</dbReference>
<dbReference type="CDD" id="cd12151">
    <property type="entry name" value="F1-ATPase_gamma"/>
    <property type="match status" value="1"/>
</dbReference>
<dbReference type="FunFam" id="1.10.287.80:FF:000001">
    <property type="entry name" value="ATP synthase gamma chain"/>
    <property type="match status" value="1"/>
</dbReference>
<dbReference type="FunFam" id="3.40.1380.10:FF:000003">
    <property type="entry name" value="ATP synthase subunit gamma"/>
    <property type="match status" value="1"/>
</dbReference>
<dbReference type="Gene3D" id="3.40.1380.10">
    <property type="match status" value="1"/>
</dbReference>
<dbReference type="Gene3D" id="1.10.287.80">
    <property type="entry name" value="ATP synthase, gamma subunit, helix hairpin domain"/>
    <property type="match status" value="1"/>
</dbReference>
<dbReference type="InterPro" id="IPR035968">
    <property type="entry name" value="ATP_synth_F1_ATPase_gsu"/>
</dbReference>
<dbReference type="InterPro" id="IPR000131">
    <property type="entry name" value="ATP_synth_F1_gsu"/>
</dbReference>
<dbReference type="InterPro" id="IPR023632">
    <property type="entry name" value="ATP_synth_F1_gsu_CS"/>
</dbReference>
<dbReference type="NCBIfam" id="TIGR01146">
    <property type="entry name" value="ATPsyn_F1gamma"/>
    <property type="match status" value="1"/>
</dbReference>
<dbReference type="PANTHER" id="PTHR11693">
    <property type="entry name" value="ATP SYNTHASE GAMMA CHAIN"/>
    <property type="match status" value="1"/>
</dbReference>
<dbReference type="PANTHER" id="PTHR11693:SF22">
    <property type="entry name" value="ATP SYNTHASE SUBUNIT GAMMA, MITOCHONDRIAL"/>
    <property type="match status" value="1"/>
</dbReference>
<dbReference type="Pfam" id="PF00231">
    <property type="entry name" value="ATP-synt"/>
    <property type="match status" value="1"/>
</dbReference>
<dbReference type="PIRSF" id="PIRSF039089">
    <property type="entry name" value="ATP_synthase_gamma"/>
    <property type="match status" value="1"/>
</dbReference>
<dbReference type="PRINTS" id="PR00126">
    <property type="entry name" value="ATPASEGAMMA"/>
</dbReference>
<dbReference type="SUPFAM" id="SSF52943">
    <property type="entry name" value="ATP synthase (F1-ATPase), gamma subunit"/>
    <property type="match status" value="1"/>
</dbReference>
<dbReference type="PROSITE" id="PS00153">
    <property type="entry name" value="ATPASE_GAMMA"/>
    <property type="match status" value="1"/>
</dbReference>
<feature type="transit peptide" description="Mitochondrion" evidence="3">
    <location>
        <begin position="1"/>
        <end position="21"/>
    </location>
</feature>
<feature type="chain" id="PRO_0000445318" description="ATP synthase subunit gamma, mitochondrial" evidence="6">
    <location>
        <begin position="22"/>
        <end position="293"/>
    </location>
</feature>
<feature type="helix" evidence="10">
    <location>
        <begin position="25"/>
        <end position="42"/>
    </location>
</feature>
<feature type="turn" evidence="10">
    <location>
        <begin position="43"/>
        <end position="45"/>
    </location>
</feature>
<feature type="helix" evidence="10">
    <location>
        <begin position="46"/>
        <end position="63"/>
    </location>
</feature>
<feature type="helix" evidence="10">
    <location>
        <begin position="67"/>
        <end position="69"/>
    </location>
</feature>
<feature type="turn" evidence="10">
    <location>
        <begin position="70"/>
        <end position="72"/>
    </location>
</feature>
<feature type="helix" evidence="10">
    <location>
        <begin position="73"/>
        <end position="75"/>
    </location>
</feature>
<feature type="strand" evidence="10">
    <location>
        <begin position="87"/>
        <end position="91"/>
    </location>
</feature>
<feature type="helix" evidence="10">
    <location>
        <begin position="102"/>
        <end position="115"/>
    </location>
</feature>
<feature type="strand" evidence="10">
    <location>
        <begin position="125"/>
        <end position="130"/>
    </location>
</feature>
<feature type="helix" evidence="10">
    <location>
        <begin position="131"/>
        <end position="137"/>
    </location>
</feature>
<feature type="turn" evidence="10">
    <location>
        <begin position="138"/>
        <end position="140"/>
    </location>
</feature>
<feature type="strand" evidence="10">
    <location>
        <begin position="154"/>
        <end position="156"/>
    </location>
</feature>
<feature type="helix" evidence="10">
    <location>
        <begin position="160"/>
        <end position="172"/>
    </location>
</feature>
<feature type="strand" evidence="10">
    <location>
        <begin position="177"/>
        <end position="182"/>
    </location>
</feature>
<feature type="strand" evidence="10">
    <location>
        <begin position="184"/>
        <end position="187"/>
    </location>
</feature>
<feature type="strand" evidence="10">
    <location>
        <begin position="192"/>
        <end position="194"/>
    </location>
</feature>
<feature type="strand" evidence="10">
    <location>
        <begin position="197"/>
        <end position="199"/>
    </location>
</feature>
<feature type="helix" evidence="10">
    <location>
        <begin position="202"/>
        <end position="206"/>
    </location>
</feature>
<feature type="helix" evidence="10">
    <location>
        <begin position="223"/>
        <end position="289"/>
    </location>
</feature>
<sequence>MFALRTAARPAARSVGATRNYATLREIEMRLKSIKNIEKITNTMKIVASTKLGKAQRAMATSKVYNEASEKVFENSETAVPENIEKRLWVVVSSDKGLCGSIHSQLARTVRRKLLDFESGEKLIDIVAVGEKIKAQLGRSNPEQMRLSFGGTGKEAPTFEEAAHIADEILALDTQYDDIEIVYNKVLSGISFEPIMKESYSAKAIEDAPKFGQYELEDDVVKNLADFSLANTIYAAMAEGHAAEISARRNAMDNASKNASDMINKYSILYNRTRQAVITNELVDIITGASSLE</sequence>
<name>ATPG_YARLI</name>
<evidence type="ECO:0000250" key="1">
    <source>
        <dbReference type="UniProtKB" id="P38077"/>
    </source>
</evidence>
<evidence type="ECO:0000255" key="2">
    <source>
        <dbReference type="RuleBase" id="RU004001"/>
    </source>
</evidence>
<evidence type="ECO:0000269" key="3">
    <source>
    </source>
</evidence>
<evidence type="ECO:0000269" key="4">
    <source>
    </source>
</evidence>
<evidence type="ECO:0000303" key="5">
    <source>
    </source>
</evidence>
<evidence type="ECO:0000305" key="6"/>
<evidence type="ECO:0000305" key="7">
    <source>
    </source>
</evidence>
<evidence type="ECO:0000312" key="8">
    <source>
        <dbReference type="EMBL" id="CAG77729.2"/>
    </source>
</evidence>
<evidence type="ECO:0000312" key="9">
    <source>
        <dbReference type="Proteomes" id="UP000001300"/>
    </source>
</evidence>
<evidence type="ECO:0007829" key="10">
    <source>
        <dbReference type="PDB" id="5FL7"/>
    </source>
</evidence>
<gene>
    <name evidence="1" type="primary">ATP3</name>
    <name evidence="8" type="ordered locus">YALI0_F02893g</name>
</gene>
<reference evidence="9" key="1">
    <citation type="journal article" date="2004" name="Nature">
        <title>Genome evolution in yeasts.</title>
        <authorList>
            <person name="Dujon B."/>
            <person name="Sherman D."/>
            <person name="Fischer G."/>
            <person name="Durrens P."/>
            <person name="Casaregola S."/>
            <person name="Lafontaine I."/>
            <person name="de Montigny J."/>
            <person name="Marck C."/>
            <person name="Neuveglise C."/>
            <person name="Talla E."/>
            <person name="Goffard N."/>
            <person name="Frangeul L."/>
            <person name="Aigle M."/>
            <person name="Anthouard V."/>
            <person name="Babour A."/>
            <person name="Barbe V."/>
            <person name="Barnay S."/>
            <person name="Blanchin S."/>
            <person name="Beckerich J.-M."/>
            <person name="Beyne E."/>
            <person name="Bleykasten C."/>
            <person name="Boisrame A."/>
            <person name="Boyer J."/>
            <person name="Cattolico L."/>
            <person name="Confanioleri F."/>
            <person name="de Daruvar A."/>
            <person name="Despons L."/>
            <person name="Fabre E."/>
            <person name="Fairhead C."/>
            <person name="Ferry-Dumazet H."/>
            <person name="Groppi A."/>
            <person name="Hantraye F."/>
            <person name="Hennequin C."/>
            <person name="Jauniaux N."/>
            <person name="Joyet P."/>
            <person name="Kachouri R."/>
            <person name="Kerrest A."/>
            <person name="Koszul R."/>
            <person name="Lemaire M."/>
            <person name="Lesur I."/>
            <person name="Ma L."/>
            <person name="Muller H."/>
            <person name="Nicaud J.-M."/>
            <person name="Nikolski M."/>
            <person name="Oztas S."/>
            <person name="Ozier-Kalogeropoulos O."/>
            <person name="Pellenz S."/>
            <person name="Potier S."/>
            <person name="Richard G.-F."/>
            <person name="Straub M.-L."/>
            <person name="Suleau A."/>
            <person name="Swennen D."/>
            <person name="Tekaia F."/>
            <person name="Wesolowski-Louvel M."/>
            <person name="Westhof E."/>
            <person name="Wirth B."/>
            <person name="Zeniou-Meyer M."/>
            <person name="Zivanovic Y."/>
            <person name="Bolotin-Fukuhara M."/>
            <person name="Thierry A."/>
            <person name="Bouchier C."/>
            <person name="Caudron B."/>
            <person name="Scarpelli C."/>
            <person name="Gaillardin C."/>
            <person name="Weissenbach J."/>
            <person name="Wincker P."/>
            <person name="Souciet J.-L."/>
        </authorList>
    </citation>
    <scope>NUCLEOTIDE SEQUENCE [LARGE SCALE GENOMIC DNA]</scope>
    <source>
        <strain>CLIB 122 / E 150</strain>
    </source>
</reference>
<reference evidence="6" key="2">
    <citation type="journal article" date="2015" name="Biochem. J.">
        <title>The purification and characterization of ATP synthase complexes from the mitochondria of four fungal species.</title>
        <authorList>
            <person name="Liu S."/>
            <person name="Charlesworth T.J."/>
            <person name="Bason J.V."/>
            <person name="Montgomery M.G."/>
            <person name="Harbour M.E."/>
            <person name="Fearnley I.M."/>
            <person name="Walker J.E."/>
        </authorList>
    </citation>
    <scope>IDENTIFICATION IN ATP SYNTHASE COMPLEX</scope>
    <scope>FUNCTION OF ATP SYNTHASE COMPLEX</scope>
    <scope>SUBUNIT</scope>
    <scope>SUBCELLULAR LOCATION</scope>
    <scope>MASS SPECTROMETRY</scope>
    <scope>IDENTIFICATION BY MASS SPECTROMETRY</scope>
    <source>
        <strain evidence="5">CLIB 122 / E 150</strain>
    </source>
</reference>
<reference evidence="6" key="3">
    <citation type="journal article" date="2016" name="Mol. Cell">
        <title>Structure of a Complete ATP Synthase Dimer Reveals the Molecular Basis of Inner Mitochondrial Membrane Morphology.</title>
        <authorList>
            <person name="Hahn A."/>
            <person name="Parey K."/>
            <person name="Bublitz M."/>
            <person name="Mills D.J."/>
            <person name="Zickermann V."/>
            <person name="Vonck J."/>
            <person name="Kuehlbrandt W."/>
            <person name="Meier T."/>
        </authorList>
    </citation>
    <scope>X-RAY CRYSTALLOGRAPHY (3.5 ANGSTROMS) OF ATP SYNTHASE F1C10 COMPLEX</scope>
    <scope>STRUCTURE BY ELECTRON MICROSCOPY (7.7 ANGSTROMS) OF DIMERIC ATP SYNTHASE COMPLEX</scope>
    <scope>FUNCTION</scope>
    <scope>SUBUNIT</scope>
    <scope>SUBCELLULAR LOCATION</scope>
    <scope>IDENTIFICATION BY MASS SPECTROMETRY</scope>
</reference>